<sequence>MQAELVIKNGLVILETGEVITDVAVQGGKIVAIGQDLSGERVIDATGLVVSPGMVDAHVHITDPGGGYRDEWEGYVTGTAACAKGGVTTFMEMPLNQIPATVDKTSLEIKYKAGENKLKVDVGSFGGVVPTNLADGIQELDEGGVSGYKCFLGTCGDRSIEGDFQNVDDYSLYEGMKQVAKTGKVLAIHAENAPITDKLGAVAYQNGETTLAAYVATRPVFTEVEAIQKAILFAKETGCRIHICHVACQEGVEEVLKAQAEGVDVTCETCTHYLYFTTDELDAIGPVVKCSPPIRDADQQAALWNHVQTGGIAFVTSDHSPCTPDLKDTTNAFEAWGGISGVQNNVDVLFDEAVQKRGLSLKQFADMIAANPADRYHLAQKGRISIGKDADFVLIKPNAPYILKAEDLEYRNKISPYIGREIGAQVIQTILRGETIYAQETGVTEAFNGVFIKN</sequence>
<organism>
    <name type="scientific">Enterococcus faecalis (strain ATCC 700802 / V583)</name>
    <dbReference type="NCBI Taxonomy" id="226185"/>
    <lineage>
        <taxon>Bacteria</taxon>
        <taxon>Bacillati</taxon>
        <taxon>Bacillota</taxon>
        <taxon>Bacilli</taxon>
        <taxon>Lactobacillales</taxon>
        <taxon>Enterococcaceae</taxon>
        <taxon>Enterococcus</taxon>
    </lineage>
</organism>
<gene>
    <name evidence="1" type="primary">allB</name>
    <name type="ordered locus">EF_2999</name>
</gene>
<dbReference type="EC" id="3.5.2.5" evidence="1"/>
<dbReference type="EMBL" id="AE016830">
    <property type="protein sequence ID" value="AAO82684.1"/>
    <property type="molecule type" value="Genomic_DNA"/>
</dbReference>
<dbReference type="RefSeq" id="NP_816614.1">
    <property type="nucleotide sequence ID" value="NC_004668.1"/>
</dbReference>
<dbReference type="RefSeq" id="WP_002399799.1">
    <property type="nucleotide sequence ID" value="NZ_KE136524.1"/>
</dbReference>
<dbReference type="SMR" id="Q82ZQ1"/>
<dbReference type="STRING" id="226185.EF_2999"/>
<dbReference type="EnsemblBacteria" id="AAO82684">
    <property type="protein sequence ID" value="AAO82684"/>
    <property type="gene ID" value="EF_2999"/>
</dbReference>
<dbReference type="KEGG" id="efa:EF2999"/>
<dbReference type="PATRIC" id="fig|226185.45.peg.569"/>
<dbReference type="eggNOG" id="COG0044">
    <property type="taxonomic scope" value="Bacteria"/>
</dbReference>
<dbReference type="HOGENOM" id="CLU_015572_4_2_9"/>
<dbReference type="UniPathway" id="UPA00395">
    <property type="reaction ID" value="UER00653"/>
</dbReference>
<dbReference type="Proteomes" id="UP000001415">
    <property type="component" value="Chromosome"/>
</dbReference>
<dbReference type="GO" id="GO:0005737">
    <property type="term" value="C:cytoplasm"/>
    <property type="evidence" value="ECO:0007669"/>
    <property type="project" value="TreeGrafter"/>
</dbReference>
<dbReference type="GO" id="GO:0004038">
    <property type="term" value="F:allantoinase activity"/>
    <property type="evidence" value="ECO:0007669"/>
    <property type="project" value="UniProtKB-UniRule"/>
</dbReference>
<dbReference type="GO" id="GO:0050897">
    <property type="term" value="F:cobalt ion binding"/>
    <property type="evidence" value="ECO:0007669"/>
    <property type="project" value="InterPro"/>
</dbReference>
<dbReference type="GO" id="GO:0008270">
    <property type="term" value="F:zinc ion binding"/>
    <property type="evidence" value="ECO:0007669"/>
    <property type="project" value="InterPro"/>
</dbReference>
<dbReference type="GO" id="GO:0000256">
    <property type="term" value="P:allantoin catabolic process"/>
    <property type="evidence" value="ECO:0007669"/>
    <property type="project" value="UniProtKB-UniRule"/>
</dbReference>
<dbReference type="GO" id="GO:0006145">
    <property type="term" value="P:purine nucleobase catabolic process"/>
    <property type="evidence" value="ECO:0007669"/>
    <property type="project" value="TreeGrafter"/>
</dbReference>
<dbReference type="CDD" id="cd01315">
    <property type="entry name" value="L-HYD_ALN"/>
    <property type="match status" value="1"/>
</dbReference>
<dbReference type="Gene3D" id="3.20.20.140">
    <property type="entry name" value="Metal-dependent hydrolases"/>
    <property type="match status" value="1"/>
</dbReference>
<dbReference type="Gene3D" id="2.30.40.10">
    <property type="entry name" value="Urease, subunit C, domain 1"/>
    <property type="match status" value="1"/>
</dbReference>
<dbReference type="HAMAP" id="MF_01645">
    <property type="entry name" value="Hydantoinase"/>
    <property type="match status" value="1"/>
</dbReference>
<dbReference type="InterPro" id="IPR017593">
    <property type="entry name" value="Allantoinase"/>
</dbReference>
<dbReference type="InterPro" id="IPR047604">
    <property type="entry name" value="Allantoinase_bact"/>
</dbReference>
<dbReference type="InterPro" id="IPR006680">
    <property type="entry name" value="Amidohydro-rel"/>
</dbReference>
<dbReference type="InterPro" id="IPR050138">
    <property type="entry name" value="DHOase/Allantoinase_Hydrolase"/>
</dbReference>
<dbReference type="InterPro" id="IPR011059">
    <property type="entry name" value="Metal-dep_hydrolase_composite"/>
</dbReference>
<dbReference type="InterPro" id="IPR032466">
    <property type="entry name" value="Metal_Hydrolase"/>
</dbReference>
<dbReference type="NCBIfam" id="TIGR03178">
    <property type="entry name" value="allantoinase"/>
    <property type="match status" value="1"/>
</dbReference>
<dbReference type="NCBIfam" id="NF005960">
    <property type="entry name" value="PRK08044.1"/>
    <property type="match status" value="1"/>
</dbReference>
<dbReference type="PANTHER" id="PTHR43668">
    <property type="entry name" value="ALLANTOINASE"/>
    <property type="match status" value="1"/>
</dbReference>
<dbReference type="PANTHER" id="PTHR43668:SF4">
    <property type="entry name" value="ALLANTOINASE"/>
    <property type="match status" value="1"/>
</dbReference>
<dbReference type="Pfam" id="PF01979">
    <property type="entry name" value="Amidohydro_1"/>
    <property type="match status" value="1"/>
</dbReference>
<dbReference type="SUPFAM" id="SSF51338">
    <property type="entry name" value="Composite domain of metallo-dependent hydrolases"/>
    <property type="match status" value="1"/>
</dbReference>
<dbReference type="SUPFAM" id="SSF51556">
    <property type="entry name" value="Metallo-dependent hydrolases"/>
    <property type="match status" value="1"/>
</dbReference>
<evidence type="ECO:0000255" key="1">
    <source>
        <dbReference type="HAMAP-Rule" id="MF_01645"/>
    </source>
</evidence>
<proteinExistence type="inferred from homology"/>
<comment type="function">
    <text evidence="1">Catalyzes the conversion of allantoin (5-ureidohydantoin) to allantoic acid by hydrolytic cleavage of the five-member hydantoin ring.</text>
</comment>
<comment type="catalytic activity">
    <reaction evidence="1">
        <text>(S)-allantoin + H2O = allantoate + H(+)</text>
        <dbReference type="Rhea" id="RHEA:17029"/>
        <dbReference type="ChEBI" id="CHEBI:15377"/>
        <dbReference type="ChEBI" id="CHEBI:15378"/>
        <dbReference type="ChEBI" id="CHEBI:15678"/>
        <dbReference type="ChEBI" id="CHEBI:17536"/>
        <dbReference type="EC" id="3.5.2.5"/>
    </reaction>
</comment>
<comment type="cofactor">
    <cofactor evidence="1">
        <name>Zn(2+)</name>
        <dbReference type="ChEBI" id="CHEBI:29105"/>
    </cofactor>
    <text evidence="1">Binds 2 Zn(2+) ions per subunit.</text>
</comment>
<comment type="pathway">
    <text evidence="1">Nitrogen metabolism; (S)-allantoin degradation; allantoate from (S)-allantoin: step 1/1.</text>
</comment>
<comment type="subunit">
    <text evidence="1">Homotetramer.</text>
</comment>
<comment type="PTM">
    <text evidence="1">Carboxylation allows a single lysine to coordinate two zinc ions.</text>
</comment>
<comment type="similarity">
    <text evidence="1">Belongs to the metallo-dependent hydrolases superfamily. Allantoinase family.</text>
</comment>
<feature type="chain" id="PRO_0000317674" description="Allantoinase">
    <location>
        <begin position="1"/>
        <end position="454"/>
    </location>
</feature>
<feature type="binding site" evidence="1">
    <location>
        <position position="58"/>
    </location>
    <ligand>
        <name>Zn(2+)</name>
        <dbReference type="ChEBI" id="CHEBI:29105"/>
        <label>1</label>
    </ligand>
</feature>
<feature type="binding site" evidence="1">
    <location>
        <position position="60"/>
    </location>
    <ligand>
        <name>Zn(2+)</name>
        <dbReference type="ChEBI" id="CHEBI:29105"/>
        <label>1</label>
    </ligand>
</feature>
<feature type="binding site" description="via carbamate group" evidence="1">
    <location>
        <position position="149"/>
    </location>
    <ligand>
        <name>Zn(2+)</name>
        <dbReference type="ChEBI" id="CHEBI:29105"/>
        <label>1</label>
    </ligand>
</feature>
<feature type="binding site" description="via carbamate group" evidence="1">
    <location>
        <position position="149"/>
    </location>
    <ligand>
        <name>Zn(2+)</name>
        <dbReference type="ChEBI" id="CHEBI:29105"/>
        <label>2</label>
    </ligand>
</feature>
<feature type="binding site" evidence="1">
    <location>
        <position position="189"/>
    </location>
    <ligand>
        <name>Zn(2+)</name>
        <dbReference type="ChEBI" id="CHEBI:29105"/>
        <label>2</label>
    </ligand>
</feature>
<feature type="binding site" evidence="1">
    <location>
        <position position="245"/>
    </location>
    <ligand>
        <name>Zn(2+)</name>
        <dbReference type="ChEBI" id="CHEBI:29105"/>
        <label>2</label>
    </ligand>
</feature>
<feature type="binding site" evidence="1">
    <location>
        <position position="318"/>
    </location>
    <ligand>
        <name>Zn(2+)</name>
        <dbReference type="ChEBI" id="CHEBI:29105"/>
        <label>1</label>
    </ligand>
</feature>
<feature type="modified residue" description="N6-carboxylysine" evidence="1">
    <location>
        <position position="149"/>
    </location>
</feature>
<keyword id="KW-0378">Hydrolase</keyword>
<keyword id="KW-0479">Metal-binding</keyword>
<keyword id="KW-0659">Purine metabolism</keyword>
<keyword id="KW-1185">Reference proteome</keyword>
<keyword id="KW-0862">Zinc</keyword>
<protein>
    <recommendedName>
        <fullName evidence="1">Allantoinase</fullName>
        <ecNumber evidence="1">3.5.2.5</ecNumber>
    </recommendedName>
    <alternativeName>
        <fullName evidence="1">Allantoin-utilizing enzyme</fullName>
    </alternativeName>
</protein>
<reference key="1">
    <citation type="journal article" date="2003" name="Science">
        <title>Role of mobile DNA in the evolution of vancomycin-resistant Enterococcus faecalis.</title>
        <authorList>
            <person name="Paulsen I.T."/>
            <person name="Banerjei L."/>
            <person name="Myers G.S.A."/>
            <person name="Nelson K.E."/>
            <person name="Seshadri R."/>
            <person name="Read T.D."/>
            <person name="Fouts D.E."/>
            <person name="Eisen J.A."/>
            <person name="Gill S.R."/>
            <person name="Heidelberg J.F."/>
            <person name="Tettelin H."/>
            <person name="Dodson R.J."/>
            <person name="Umayam L.A."/>
            <person name="Brinkac L.M."/>
            <person name="Beanan M.J."/>
            <person name="Daugherty S.C."/>
            <person name="DeBoy R.T."/>
            <person name="Durkin S.A."/>
            <person name="Kolonay J.F."/>
            <person name="Madupu R."/>
            <person name="Nelson W.C."/>
            <person name="Vamathevan J.J."/>
            <person name="Tran B."/>
            <person name="Upton J."/>
            <person name="Hansen T."/>
            <person name="Shetty J."/>
            <person name="Khouri H.M."/>
            <person name="Utterback T.R."/>
            <person name="Radune D."/>
            <person name="Ketchum K.A."/>
            <person name="Dougherty B.A."/>
            <person name="Fraser C.M."/>
        </authorList>
    </citation>
    <scope>NUCLEOTIDE SEQUENCE [LARGE SCALE GENOMIC DNA]</scope>
    <source>
        <strain>ATCC 700802 / V583</strain>
    </source>
</reference>
<name>ALLB_ENTFA</name>
<accession>Q82ZQ1</accession>